<protein>
    <recommendedName>
        <fullName evidence="2">Pescadillo homolog</fullName>
    </recommendedName>
</protein>
<evidence type="ECO:0000250" key="1"/>
<evidence type="ECO:0000255" key="2">
    <source>
        <dbReference type="HAMAP-Rule" id="MF_03028"/>
    </source>
</evidence>
<evidence type="ECO:0000256" key="3">
    <source>
        <dbReference type="SAM" id="MobiDB-lite"/>
    </source>
</evidence>
<proteinExistence type="inferred from homology"/>
<feature type="chain" id="PRO_0000370453" description="Pescadillo homolog">
    <location>
        <begin position="1"/>
        <end position="629"/>
    </location>
</feature>
<feature type="domain" description="BRCT" evidence="2">
    <location>
        <begin position="321"/>
        <end position="414"/>
    </location>
</feature>
<feature type="region of interest" description="Disordered" evidence="3">
    <location>
        <begin position="439"/>
        <end position="470"/>
    </location>
</feature>
<feature type="region of interest" description="Disordered" evidence="3">
    <location>
        <begin position="488"/>
        <end position="568"/>
    </location>
</feature>
<feature type="region of interest" description="Disordered" evidence="3">
    <location>
        <begin position="598"/>
        <end position="629"/>
    </location>
</feature>
<feature type="coiled-coil region" evidence="2">
    <location>
        <begin position="584"/>
        <end position="627"/>
    </location>
</feature>
<feature type="compositionally biased region" description="Acidic residues" evidence="3">
    <location>
        <begin position="454"/>
        <end position="470"/>
    </location>
</feature>
<feature type="compositionally biased region" description="Acidic residues" evidence="3">
    <location>
        <begin position="498"/>
        <end position="523"/>
    </location>
</feature>
<feature type="compositionally biased region" description="Basic and acidic residues" evidence="3">
    <location>
        <begin position="524"/>
        <end position="535"/>
    </location>
</feature>
<feature type="compositionally biased region" description="Basic residues" evidence="3">
    <location>
        <begin position="542"/>
        <end position="551"/>
    </location>
</feature>
<feature type="compositionally biased region" description="Basic and acidic residues" evidence="3">
    <location>
        <begin position="552"/>
        <end position="561"/>
    </location>
</feature>
<feature type="compositionally biased region" description="Basic and acidic residues" evidence="3">
    <location>
        <begin position="598"/>
        <end position="617"/>
    </location>
</feature>
<feature type="compositionally biased region" description="Low complexity" evidence="3">
    <location>
        <begin position="618"/>
        <end position="629"/>
    </location>
</feature>
<feature type="modified residue" description="Phosphoserine" evidence="1">
    <location>
        <position position="453"/>
    </location>
</feature>
<feature type="modified residue" description="Phosphoserine" evidence="1">
    <location>
        <position position="457"/>
    </location>
</feature>
<sequence>MRRPKKYESGEATQYISRRAALRKLQLSLNDFRRLCILKGVYPREPKHRRRAQKGSSEIKVLYHTKDIRFLLHESIVWTLRDYKIFAKKSNRDRAIKDFRNLKRRLALFPEIKLDHIVKERYPTFIDALKDLDDCLTLLFLFSTFPSLHLIPREQSNLCRRLTIEFLHYVIASKSLRKVFISIKGYYFQAEIKGQKVTWIVPHYYPFKPQSRQEVDFKVMSIFVEFYTIMLGFTNFRLFHGLNLAYPPQFPSSVLQDSEESLKDEASFVSDRIAALNFELLRTDKVQEDEEELDIDMELLEQDGDSKRIIKMKQEAQEVSRLRTLFKGLKFFINREVPREPLVILIRSFGGKVSWDSSIFAGSTYDEGDETITHQIVDRPSITTQYISRDYIQPQWVFDCVNQRQLLPTNKYFIGETLPPHLSPFVDSKRDSYIPPEEKALLDPSLIETHAQSDEDSEDEAEKEEEETVDQELLDAQLQLAYQQETAEYKKYGGPDGVNEDEEDPEDDDEDDDEEEAEEEELDEKSKRLQEEKQKMSVQSGKVHKVNKRQVHKAEVDEHRLQARMVKPRHRNLFRKLIREKQTKEKEEWLLRKKRRTIEASEKEARKTAKREARKEAAAAAAKASKLGK</sequence>
<reference key="1">
    <citation type="journal article" date="2007" name="Nature">
        <title>Evolution of genes and genomes on the Drosophila phylogeny.</title>
        <authorList>
            <consortium name="Drosophila 12 genomes consortium"/>
        </authorList>
    </citation>
    <scope>NUCLEOTIDE SEQUENCE [LARGE SCALE GENOMIC DNA]</scope>
    <source>
        <strain>Tucson 14021-0224.01</strain>
    </source>
</reference>
<organism>
    <name type="scientific">Drosophila erecta</name>
    <name type="common">Fruit fly</name>
    <dbReference type="NCBI Taxonomy" id="7220"/>
    <lineage>
        <taxon>Eukaryota</taxon>
        <taxon>Metazoa</taxon>
        <taxon>Ecdysozoa</taxon>
        <taxon>Arthropoda</taxon>
        <taxon>Hexapoda</taxon>
        <taxon>Insecta</taxon>
        <taxon>Pterygota</taxon>
        <taxon>Neoptera</taxon>
        <taxon>Endopterygota</taxon>
        <taxon>Diptera</taxon>
        <taxon>Brachycera</taxon>
        <taxon>Muscomorpha</taxon>
        <taxon>Ephydroidea</taxon>
        <taxon>Drosophilidae</taxon>
        <taxon>Drosophila</taxon>
        <taxon>Sophophora</taxon>
    </lineage>
</organism>
<comment type="function">
    <text evidence="2">Required for maturation of ribosomal RNAs and formation of the large ribosomal subunit.</text>
</comment>
<comment type="subcellular location">
    <subcellularLocation>
        <location evidence="2">Nucleus</location>
        <location evidence="2">Nucleolus</location>
    </subcellularLocation>
    <subcellularLocation>
        <location evidence="2">Nucleus</location>
        <location evidence="2">Nucleoplasm</location>
    </subcellularLocation>
</comment>
<comment type="similarity">
    <text evidence="2">Belongs to the pescadillo family.</text>
</comment>
<dbReference type="EMBL" id="CH954177">
    <property type="protein sequence ID" value="EDV58393.1"/>
    <property type="molecule type" value="Genomic_DNA"/>
</dbReference>
<dbReference type="SMR" id="B3N8H0"/>
<dbReference type="EnsemblMetazoa" id="FBtr0144068">
    <property type="protein sequence ID" value="FBpp0142560"/>
    <property type="gene ID" value="FBgn0116153"/>
</dbReference>
<dbReference type="EnsemblMetazoa" id="XM_001969298.3">
    <property type="protein sequence ID" value="XP_001969334.1"/>
    <property type="gene ID" value="LOC6543314"/>
</dbReference>
<dbReference type="GeneID" id="6543314"/>
<dbReference type="KEGG" id="der:6543314"/>
<dbReference type="eggNOG" id="KOG2481">
    <property type="taxonomic scope" value="Eukaryota"/>
</dbReference>
<dbReference type="HOGENOM" id="CLU_019619_0_0_1"/>
<dbReference type="OMA" id="QKVTWIV"/>
<dbReference type="OrthoDB" id="10264910at2759"/>
<dbReference type="PhylomeDB" id="B3N8H0"/>
<dbReference type="Proteomes" id="UP000008711">
    <property type="component" value="Unassembled WGS sequence"/>
</dbReference>
<dbReference type="GO" id="GO:0005730">
    <property type="term" value="C:nucleolus"/>
    <property type="evidence" value="ECO:0000250"/>
    <property type="project" value="UniProtKB"/>
</dbReference>
<dbReference type="GO" id="GO:0005654">
    <property type="term" value="C:nucleoplasm"/>
    <property type="evidence" value="ECO:0000250"/>
    <property type="project" value="UniProtKB"/>
</dbReference>
<dbReference type="GO" id="GO:0070545">
    <property type="term" value="C:PeBoW complex"/>
    <property type="evidence" value="ECO:0007669"/>
    <property type="project" value="TreeGrafter"/>
</dbReference>
<dbReference type="GO" id="GO:0030687">
    <property type="term" value="C:preribosome, large subunit precursor"/>
    <property type="evidence" value="ECO:0007669"/>
    <property type="project" value="UniProtKB-UniRule"/>
</dbReference>
<dbReference type="GO" id="GO:0043021">
    <property type="term" value="F:ribonucleoprotein complex binding"/>
    <property type="evidence" value="ECO:0007669"/>
    <property type="project" value="UniProtKB-UniRule"/>
</dbReference>
<dbReference type="GO" id="GO:0003723">
    <property type="term" value="F:RNA binding"/>
    <property type="evidence" value="ECO:0007669"/>
    <property type="project" value="TreeGrafter"/>
</dbReference>
<dbReference type="GO" id="GO:0000466">
    <property type="term" value="P:maturation of 5.8S rRNA from tricistronic rRNA transcript (SSU-rRNA, 5.8S rRNA, LSU-rRNA)"/>
    <property type="evidence" value="ECO:0007669"/>
    <property type="project" value="UniProtKB-UniRule"/>
</dbReference>
<dbReference type="GO" id="GO:0000463">
    <property type="term" value="P:maturation of LSU-rRNA from tricistronic rRNA transcript (SSU-rRNA, 5.8S rRNA, LSU-rRNA)"/>
    <property type="evidence" value="ECO:0000250"/>
    <property type="project" value="UniProtKB"/>
</dbReference>
<dbReference type="CDD" id="cd17709">
    <property type="entry name" value="BRCT_pescadillo_like"/>
    <property type="match status" value="1"/>
</dbReference>
<dbReference type="FunFam" id="3.40.50.10190:FF:000002">
    <property type="entry name" value="Pescadillo homolog"/>
    <property type="match status" value="1"/>
</dbReference>
<dbReference type="Gene3D" id="3.40.50.10190">
    <property type="entry name" value="BRCT domain"/>
    <property type="match status" value="1"/>
</dbReference>
<dbReference type="HAMAP" id="MF_03028">
    <property type="entry name" value="Pescadillo"/>
    <property type="match status" value="1"/>
</dbReference>
<dbReference type="InterPro" id="IPR001357">
    <property type="entry name" value="BRCT_dom"/>
</dbReference>
<dbReference type="InterPro" id="IPR036420">
    <property type="entry name" value="BRCT_dom_sf"/>
</dbReference>
<dbReference type="InterPro" id="IPR010613">
    <property type="entry name" value="PES"/>
</dbReference>
<dbReference type="PANTHER" id="PTHR12221">
    <property type="entry name" value="PESCADILLO - RELATED"/>
    <property type="match status" value="1"/>
</dbReference>
<dbReference type="PANTHER" id="PTHR12221:SF6">
    <property type="entry name" value="PESCADILLO HOMOLOG"/>
    <property type="match status" value="1"/>
</dbReference>
<dbReference type="Pfam" id="PF16589">
    <property type="entry name" value="BRCT_2"/>
    <property type="match status" value="1"/>
</dbReference>
<dbReference type="Pfam" id="PF06732">
    <property type="entry name" value="Pescadillo_N"/>
    <property type="match status" value="1"/>
</dbReference>
<dbReference type="SMART" id="SM00292">
    <property type="entry name" value="BRCT"/>
    <property type="match status" value="1"/>
</dbReference>
<dbReference type="SUPFAM" id="SSF52113">
    <property type="entry name" value="BRCT domain"/>
    <property type="match status" value="1"/>
</dbReference>
<dbReference type="PROSITE" id="PS50172">
    <property type="entry name" value="BRCT"/>
    <property type="match status" value="1"/>
</dbReference>
<name>PESC_DROER</name>
<gene>
    <name type="ORF">GG24014</name>
</gene>
<accession>B3N8H0</accession>
<keyword id="KW-0175">Coiled coil</keyword>
<keyword id="KW-0539">Nucleus</keyword>
<keyword id="KW-0597">Phosphoprotein</keyword>
<keyword id="KW-0690">Ribosome biogenesis</keyword>
<keyword id="KW-0698">rRNA processing</keyword>